<comment type="function">
    <text>Collagen VI acts as a cell-binding protein.</text>
</comment>
<comment type="subunit">
    <text>Trimers composed of three different chains: alpha-1(VI), alpha-2(VI), and alpha-3(VI) or alpha-4(VI) or alpha-5(VI) or alpha-6(VI).</text>
</comment>
<comment type="subcellular location">
    <subcellularLocation>
        <location evidence="1">Secreted</location>
        <location evidence="1">Extracellular space</location>
        <location evidence="1">Extracellular matrix</location>
    </subcellularLocation>
</comment>
<comment type="PTM">
    <text>Prolines at the third position of the tripeptide repeating unit (G-X-Y) are hydroxylated in some or all of the chains.</text>
</comment>
<comment type="similarity">
    <text evidence="5">Belongs to the type VI collagen family.</text>
</comment>
<protein>
    <recommendedName>
        <fullName>Collagen alpha-1(VI) chain</fullName>
    </recommendedName>
</protein>
<feature type="signal peptide">
    <location>
        <begin position="1"/>
        <end position="19"/>
    </location>
</feature>
<feature type="chain" id="PRO_0000005759" description="Collagen alpha-1(VI) chain">
    <location>
        <begin position="20"/>
        <end position="1025"/>
    </location>
</feature>
<feature type="domain" description="VWFA 1" evidence="3">
    <location>
        <begin position="36"/>
        <end position="234"/>
    </location>
</feature>
<feature type="domain" description="VWFA 2" evidence="3">
    <location>
        <begin position="614"/>
        <end position="802"/>
    </location>
</feature>
<feature type="domain" description="VWFA 3" evidence="3">
    <location>
        <begin position="826"/>
        <end position="1018"/>
    </location>
</feature>
<feature type="region of interest" description="N-terminal globular domain">
    <location>
        <begin position="20"/>
        <end position="255"/>
    </location>
</feature>
<feature type="region of interest" description="Disordered" evidence="4">
    <location>
        <begin position="252"/>
        <end position="588"/>
    </location>
</feature>
<feature type="region of interest" description="Triple-helical region">
    <location>
        <begin position="256"/>
        <end position="591"/>
    </location>
</feature>
<feature type="region of interest" description="C-terminal globular domain">
    <location>
        <begin position="592"/>
        <end position="1025"/>
    </location>
</feature>
<feature type="short sequence motif" description="Cell attachment site">
    <location>
        <begin position="261"/>
        <end position="263"/>
    </location>
</feature>
<feature type="short sequence motif" description="Cell attachment site">
    <location>
        <begin position="441"/>
        <end position="443"/>
    </location>
</feature>
<feature type="short sequence motif" description="Cell attachment site">
    <location>
        <begin position="477"/>
        <end position="479"/>
    </location>
</feature>
<feature type="compositionally biased region" description="Basic and acidic residues" evidence="4">
    <location>
        <begin position="267"/>
        <end position="284"/>
    </location>
</feature>
<feature type="compositionally biased region" description="Basic and acidic residues" evidence="4">
    <location>
        <begin position="300"/>
        <end position="333"/>
    </location>
</feature>
<feature type="compositionally biased region" description="Acidic residues" evidence="4">
    <location>
        <begin position="549"/>
        <end position="559"/>
    </location>
</feature>
<feature type="compositionally biased region" description="Pro residues" evidence="4">
    <location>
        <begin position="578"/>
        <end position="588"/>
    </location>
</feature>
<feature type="glycosylation site" description="N-linked (GlcNAc...) asparagine" evidence="2">
    <location>
        <position position="211"/>
    </location>
</feature>
<feature type="glycosylation site" description="N-linked (GlcNAc...) asparagine" evidence="2">
    <location>
        <position position="515"/>
    </location>
</feature>
<feature type="glycosylation site" description="N-linked (GlcNAc...) asparagine" evidence="2">
    <location>
        <position position="536"/>
    </location>
</feature>
<feature type="glycosylation site" description="N-linked (GlcNAc...) asparagine" evidence="2">
    <location>
        <position position="801"/>
    </location>
</feature>
<feature type="glycosylation site" description="N-linked (GlcNAc...) asparagine" evidence="2">
    <location>
        <position position="893"/>
    </location>
</feature>
<feature type="sequence conflict" description="In Ref. 2; CAA79152." evidence="5" ref="2">
    <original>DM</original>
    <variation>TL</variation>
    <location>
        <begin position="674"/>
        <end position="675"/>
    </location>
</feature>
<feature type="sequence conflict" description="In Ref. 2; CAA79152." evidence="5" ref="2">
    <original>T</original>
    <variation>A</variation>
    <location>
        <position position="709"/>
    </location>
</feature>
<feature type="sequence conflict" description="In Ref. 2; CAA79152." evidence="5" ref="2">
    <location>
        <position position="943"/>
    </location>
</feature>
<feature type="sequence conflict" description="In Ref. 2; CAA79152." evidence="5" ref="2">
    <original>Q</original>
    <variation>R</variation>
    <location>
        <position position="960"/>
    </location>
</feature>
<evidence type="ECO:0000250" key="1"/>
<evidence type="ECO:0000255" key="2"/>
<evidence type="ECO:0000255" key="3">
    <source>
        <dbReference type="PROSITE-ProRule" id="PRU00219"/>
    </source>
</evidence>
<evidence type="ECO:0000256" key="4">
    <source>
        <dbReference type="SAM" id="MobiDB-lite"/>
    </source>
</evidence>
<evidence type="ECO:0000305" key="5"/>
<name>CO6A1_MOUSE</name>
<organism>
    <name type="scientific">Mus musculus</name>
    <name type="common">Mouse</name>
    <dbReference type="NCBI Taxonomy" id="10090"/>
    <lineage>
        <taxon>Eukaryota</taxon>
        <taxon>Metazoa</taxon>
        <taxon>Chordata</taxon>
        <taxon>Craniata</taxon>
        <taxon>Vertebrata</taxon>
        <taxon>Euteleostomi</taxon>
        <taxon>Mammalia</taxon>
        <taxon>Eutheria</taxon>
        <taxon>Euarchontoglires</taxon>
        <taxon>Glires</taxon>
        <taxon>Rodentia</taxon>
        <taxon>Myomorpha</taxon>
        <taxon>Muroidea</taxon>
        <taxon>Muridae</taxon>
        <taxon>Murinae</taxon>
        <taxon>Mus</taxon>
        <taxon>Mus</taxon>
    </lineage>
</organism>
<reference key="1">
    <citation type="journal article" date="1993" name="Matrix">
        <title>Murine alpha 1(VI) collagen chain. Complete amino acid sequence and identification of the gene promoter region.</title>
        <authorList>
            <person name="Bonaldo P."/>
            <person name="Piccolo S."/>
            <person name="Marvulli D."/>
            <person name="Volpin D."/>
            <person name="Bressan G.M."/>
        </authorList>
    </citation>
    <scope>NUCLEOTIDE SEQUENCE [GENOMIC DNA / MRNA]</scope>
</reference>
<reference key="2">
    <citation type="journal article" date="1993" name="Biochem. J.">
        <title>Cloning and sequence analysis of cDNAs encoding the alpha 1, alpha 2 and alpha 3 chains of mouse collagen VI.</title>
        <authorList>
            <person name="Zhang R.Z."/>
            <person name="Pan T.C."/>
            <person name="Timpl R."/>
            <person name="Chu M.-L."/>
        </authorList>
    </citation>
    <scope>NUCLEOTIDE SEQUENCE [MRNA] OF 442-1025</scope>
</reference>
<reference key="3">
    <citation type="journal article" date="2010" name="Cell">
        <title>A tissue-specific atlas of mouse protein phosphorylation and expression.</title>
        <authorList>
            <person name="Huttlin E.L."/>
            <person name="Jedrychowski M.P."/>
            <person name="Elias J.E."/>
            <person name="Goswami T."/>
            <person name="Rad R."/>
            <person name="Beausoleil S.A."/>
            <person name="Villen J."/>
            <person name="Haas W."/>
            <person name="Sowa M.E."/>
            <person name="Gygi S.P."/>
        </authorList>
    </citation>
    <scope>IDENTIFICATION BY MASS SPECTROMETRY [LARGE SCALE ANALYSIS]</scope>
    <source>
        <tissue>Brown adipose tissue</tissue>
        <tissue>Heart</tissue>
        <tissue>Lung</tissue>
        <tissue>Pancreas</tissue>
        <tissue>Spleen</tissue>
        <tissue>Testis</tissue>
    </source>
</reference>
<dbReference type="EMBL" id="X66405">
    <property type="protein sequence ID" value="CAA47032.1"/>
    <property type="molecule type" value="mRNA"/>
</dbReference>
<dbReference type="EMBL" id="X66406">
    <property type="protein sequence ID" value="CAA47033.1"/>
    <property type="molecule type" value="Genomic_DNA"/>
</dbReference>
<dbReference type="EMBL" id="Z18271">
    <property type="protein sequence ID" value="CAA79152.1"/>
    <property type="molecule type" value="mRNA"/>
</dbReference>
<dbReference type="CCDS" id="CCDS23952.1"/>
<dbReference type="PIR" id="S34839">
    <property type="entry name" value="S34839"/>
</dbReference>
<dbReference type="RefSeq" id="NP_034063.1">
    <property type="nucleotide sequence ID" value="NM_009933.5"/>
</dbReference>
<dbReference type="SMR" id="Q04857"/>
<dbReference type="BioGRID" id="198823">
    <property type="interactions" value="8"/>
</dbReference>
<dbReference type="ComplexPortal" id="CPX-2965">
    <property type="entry name" value="Collagen type VI trimer"/>
</dbReference>
<dbReference type="FunCoup" id="Q04857">
    <property type="interactions" value="617"/>
</dbReference>
<dbReference type="IntAct" id="Q04857">
    <property type="interactions" value="4"/>
</dbReference>
<dbReference type="MINT" id="Q04857"/>
<dbReference type="STRING" id="10090.ENSMUSP00000001147"/>
<dbReference type="GlyCosmos" id="Q04857">
    <property type="glycosylation" value="5 sites, 12 glycans"/>
</dbReference>
<dbReference type="GlyGen" id="Q04857">
    <property type="glycosylation" value="7 sites, 4 N-linked glycans (4 sites), 1 O-linked glycan (1 site)"/>
</dbReference>
<dbReference type="iPTMnet" id="Q04857"/>
<dbReference type="PhosphoSitePlus" id="Q04857"/>
<dbReference type="SwissPalm" id="Q04857"/>
<dbReference type="jPOST" id="Q04857"/>
<dbReference type="PaxDb" id="10090-ENSMUSP00000001147"/>
<dbReference type="PeptideAtlas" id="Q04857"/>
<dbReference type="ProteomicsDB" id="283545"/>
<dbReference type="Pumba" id="Q04857"/>
<dbReference type="Antibodypedia" id="10507">
    <property type="antibodies" value="381 antibodies from 40 providers"/>
</dbReference>
<dbReference type="DNASU" id="12833"/>
<dbReference type="Ensembl" id="ENSMUST00000001147.5">
    <property type="protein sequence ID" value="ENSMUSP00000001147.5"/>
    <property type="gene ID" value="ENSMUSG00000001119.8"/>
</dbReference>
<dbReference type="GeneID" id="12833"/>
<dbReference type="KEGG" id="mmu:12833"/>
<dbReference type="UCSC" id="uc007fux.1">
    <property type="organism name" value="mouse"/>
</dbReference>
<dbReference type="AGR" id="MGI:88459"/>
<dbReference type="CTD" id="1291"/>
<dbReference type="MGI" id="MGI:88459">
    <property type="gene designation" value="Col6a1"/>
</dbReference>
<dbReference type="VEuPathDB" id="HostDB:ENSMUSG00000001119"/>
<dbReference type="eggNOG" id="KOG3544">
    <property type="taxonomic scope" value="Eukaryota"/>
</dbReference>
<dbReference type="GeneTree" id="ENSGT00940000162889"/>
<dbReference type="HOGENOM" id="CLU_009158_1_0_1"/>
<dbReference type="InParanoid" id="Q04857"/>
<dbReference type="OMA" id="QEKKCPD"/>
<dbReference type="OrthoDB" id="8889285at2759"/>
<dbReference type="PhylomeDB" id="Q04857"/>
<dbReference type="TreeFam" id="TF331207"/>
<dbReference type="Reactome" id="R-MMU-1442490">
    <property type="pathway name" value="Collagen degradation"/>
</dbReference>
<dbReference type="Reactome" id="R-MMU-1650814">
    <property type="pathway name" value="Collagen biosynthesis and modifying enzymes"/>
</dbReference>
<dbReference type="Reactome" id="R-MMU-186797">
    <property type="pathway name" value="Signaling by PDGF"/>
</dbReference>
<dbReference type="Reactome" id="R-MMU-2022090">
    <property type="pathway name" value="Assembly of collagen fibrils and other multimeric structures"/>
</dbReference>
<dbReference type="Reactome" id="R-MMU-216083">
    <property type="pathway name" value="Integrin cell surface interactions"/>
</dbReference>
<dbReference type="Reactome" id="R-MMU-3000178">
    <property type="pathway name" value="ECM proteoglycans"/>
</dbReference>
<dbReference type="Reactome" id="R-MMU-419037">
    <property type="pathway name" value="NCAM1 interactions"/>
</dbReference>
<dbReference type="Reactome" id="R-MMU-8948216">
    <property type="pathway name" value="Collagen chain trimerization"/>
</dbReference>
<dbReference type="BioGRID-ORCS" id="12833">
    <property type="hits" value="0 hits in 77 CRISPR screens"/>
</dbReference>
<dbReference type="ChiTaRS" id="Col6a1">
    <property type="organism name" value="mouse"/>
</dbReference>
<dbReference type="PRO" id="PR:Q04857"/>
<dbReference type="Proteomes" id="UP000000589">
    <property type="component" value="Chromosome 10"/>
</dbReference>
<dbReference type="RNAct" id="Q04857">
    <property type="molecule type" value="protein"/>
</dbReference>
<dbReference type="Bgee" id="ENSMUSG00000001119">
    <property type="expression patterns" value="Expressed in efferent duct and 280 other cell types or tissues"/>
</dbReference>
<dbReference type="GO" id="GO:0005604">
    <property type="term" value="C:basement membrane"/>
    <property type="evidence" value="ECO:0000314"/>
    <property type="project" value="MGI"/>
</dbReference>
<dbReference type="GO" id="GO:0005589">
    <property type="term" value="C:collagen type VI trimer"/>
    <property type="evidence" value="ECO:0000304"/>
    <property type="project" value="GO_Central"/>
</dbReference>
<dbReference type="GO" id="GO:0062023">
    <property type="term" value="C:collagen-containing extracellular matrix"/>
    <property type="evidence" value="ECO:0007005"/>
    <property type="project" value="UniProtKB"/>
</dbReference>
<dbReference type="GO" id="GO:0031012">
    <property type="term" value="C:extracellular matrix"/>
    <property type="evidence" value="ECO:0000314"/>
    <property type="project" value="MGI"/>
</dbReference>
<dbReference type="GO" id="GO:0005576">
    <property type="term" value="C:extracellular region"/>
    <property type="evidence" value="ECO:0000266"/>
    <property type="project" value="MGI"/>
</dbReference>
<dbReference type="GO" id="GO:0005615">
    <property type="term" value="C:extracellular space"/>
    <property type="evidence" value="ECO:0007005"/>
    <property type="project" value="BHF-UCL"/>
</dbReference>
<dbReference type="GO" id="GO:0097708">
    <property type="term" value="C:intracellular vesicle"/>
    <property type="evidence" value="ECO:0000314"/>
    <property type="project" value="MGI"/>
</dbReference>
<dbReference type="GO" id="GO:0005764">
    <property type="term" value="C:lysosome"/>
    <property type="evidence" value="ECO:0000314"/>
    <property type="project" value="MGI"/>
</dbReference>
<dbReference type="GO" id="GO:0005739">
    <property type="term" value="C:mitochondrion"/>
    <property type="evidence" value="ECO:0007669"/>
    <property type="project" value="GOC"/>
</dbReference>
<dbReference type="GO" id="GO:0030016">
    <property type="term" value="C:myofibril"/>
    <property type="evidence" value="ECO:0000315"/>
    <property type="project" value="MGI"/>
</dbReference>
<dbReference type="GO" id="GO:0032991">
    <property type="term" value="C:protein-containing complex"/>
    <property type="evidence" value="ECO:0000266"/>
    <property type="project" value="MGI"/>
</dbReference>
<dbReference type="GO" id="GO:0042383">
    <property type="term" value="C:sarcolemma"/>
    <property type="evidence" value="ECO:0000314"/>
    <property type="project" value="MGI"/>
</dbReference>
<dbReference type="GO" id="GO:0016529">
    <property type="term" value="C:sarcoplasmic reticulum"/>
    <property type="evidence" value="ECO:0000315"/>
    <property type="project" value="MGI"/>
</dbReference>
<dbReference type="GO" id="GO:0005518">
    <property type="term" value="F:collagen binding"/>
    <property type="evidence" value="ECO:0000266"/>
    <property type="project" value="MGI"/>
</dbReference>
<dbReference type="GO" id="GO:0048407">
    <property type="term" value="F:platelet-derived growth factor binding"/>
    <property type="evidence" value="ECO:0000266"/>
    <property type="project" value="MGI"/>
</dbReference>
<dbReference type="GO" id="GO:0006103">
    <property type="term" value="P:2-oxoglutarate metabolic process"/>
    <property type="evidence" value="ECO:0000315"/>
    <property type="project" value="MGI"/>
</dbReference>
<dbReference type="GO" id="GO:0060612">
    <property type="term" value="P:adipose tissue development"/>
    <property type="evidence" value="ECO:0000315"/>
    <property type="project" value="MGI"/>
</dbReference>
<dbReference type="GO" id="GO:0030262">
    <property type="term" value="P:apoptotic nuclear changes"/>
    <property type="evidence" value="ECO:0000315"/>
    <property type="project" value="MGI"/>
</dbReference>
<dbReference type="GO" id="GO:0006915">
    <property type="term" value="P:apoptotic process"/>
    <property type="evidence" value="ECO:0000315"/>
    <property type="project" value="MGI"/>
</dbReference>
<dbReference type="GO" id="GO:0006914">
    <property type="term" value="P:autophagy"/>
    <property type="evidence" value="ECO:0000315"/>
    <property type="project" value="MGI"/>
</dbReference>
<dbReference type="GO" id="GO:0071711">
    <property type="term" value="P:basement membrane organization"/>
    <property type="evidence" value="ECO:0000315"/>
    <property type="project" value="MGI"/>
</dbReference>
<dbReference type="GO" id="GO:0060348">
    <property type="term" value="P:bone development"/>
    <property type="evidence" value="ECO:0000315"/>
    <property type="project" value="MGI"/>
</dbReference>
<dbReference type="GO" id="GO:0030282">
    <property type="term" value="P:bone mineralization"/>
    <property type="evidence" value="ECO:0000315"/>
    <property type="project" value="MGI"/>
</dbReference>
<dbReference type="GO" id="GO:0060070">
    <property type="term" value="P:canonical Wnt signaling pathway"/>
    <property type="evidence" value="ECO:0000315"/>
    <property type="project" value="MGI"/>
</dbReference>
<dbReference type="GO" id="GO:0051216">
    <property type="term" value="P:cartilage development"/>
    <property type="evidence" value="ECO:0000315"/>
    <property type="project" value="MGI"/>
</dbReference>
<dbReference type="GO" id="GO:0070836">
    <property type="term" value="P:caveola assembly"/>
    <property type="evidence" value="ECO:0000315"/>
    <property type="project" value="MGI"/>
</dbReference>
<dbReference type="GO" id="GO:0007155">
    <property type="term" value="P:cell adhesion"/>
    <property type="evidence" value="ECO:0007669"/>
    <property type="project" value="UniProtKB-KW"/>
</dbReference>
<dbReference type="GO" id="GO:0000902">
    <property type="term" value="P:cell morphogenesis"/>
    <property type="evidence" value="ECO:0000315"/>
    <property type="project" value="MGI"/>
</dbReference>
<dbReference type="GO" id="GO:0071230">
    <property type="term" value="P:cellular response to amino acid stimulus"/>
    <property type="evidence" value="ECO:0000314"/>
    <property type="project" value="MGI"/>
</dbReference>
<dbReference type="GO" id="GO:0007623">
    <property type="term" value="P:circadian rhythm"/>
    <property type="evidence" value="ECO:0000315"/>
    <property type="project" value="MGI"/>
</dbReference>
<dbReference type="GO" id="GO:0030199">
    <property type="term" value="P:collagen fibril organization"/>
    <property type="evidence" value="ECO:0000315"/>
    <property type="project" value="MGI"/>
</dbReference>
<dbReference type="GO" id="GO:0032963">
    <property type="term" value="P:collagen metabolic process"/>
    <property type="evidence" value="ECO:0000315"/>
    <property type="project" value="MGI"/>
</dbReference>
<dbReference type="GO" id="GO:0035987">
    <property type="term" value="P:endodermal cell differentiation"/>
    <property type="evidence" value="ECO:0007669"/>
    <property type="project" value="Ensembl"/>
</dbReference>
<dbReference type="GO" id="GO:0097009">
    <property type="term" value="P:energy homeostasis"/>
    <property type="evidence" value="ECO:0000315"/>
    <property type="project" value="MGI"/>
</dbReference>
<dbReference type="GO" id="GO:0006112">
    <property type="term" value="P:energy reserve metabolic process"/>
    <property type="evidence" value="ECO:0000315"/>
    <property type="project" value="MGI"/>
</dbReference>
<dbReference type="GO" id="GO:0085029">
    <property type="term" value="P:extracellular matrix assembly"/>
    <property type="evidence" value="ECO:0000315"/>
    <property type="project" value="MGI"/>
</dbReference>
<dbReference type="GO" id="GO:0070341">
    <property type="term" value="P:fat cell proliferation"/>
    <property type="evidence" value="ECO:0000315"/>
    <property type="project" value="MGI"/>
</dbReference>
<dbReference type="GO" id="GO:0010467">
    <property type="term" value="P:gene expression"/>
    <property type="evidence" value="ECO:0000315"/>
    <property type="project" value="MGI"/>
</dbReference>
<dbReference type="GO" id="GO:0006096">
    <property type="term" value="P:glycolytic process"/>
    <property type="evidence" value="ECO:0000315"/>
    <property type="project" value="MGI"/>
</dbReference>
<dbReference type="GO" id="GO:0001942">
    <property type="term" value="P:hair follicle development"/>
    <property type="evidence" value="ECO:0000314"/>
    <property type="project" value="MGI"/>
</dbReference>
<dbReference type="GO" id="GO:0007507">
    <property type="term" value="P:heart development"/>
    <property type="evidence" value="ECO:0000315"/>
    <property type="project" value="MGI"/>
</dbReference>
<dbReference type="GO" id="GO:0048872">
    <property type="term" value="P:homeostasis of number of cells"/>
    <property type="evidence" value="ECO:0000315"/>
    <property type="project" value="MGI"/>
</dbReference>
<dbReference type="GO" id="GO:0006954">
    <property type="term" value="P:inflammatory response"/>
    <property type="evidence" value="ECO:0000315"/>
    <property type="project" value="MGI"/>
</dbReference>
<dbReference type="GO" id="GO:0008286">
    <property type="term" value="P:insulin receptor signaling pathway"/>
    <property type="evidence" value="ECO:0000315"/>
    <property type="project" value="MGI"/>
</dbReference>
<dbReference type="GO" id="GO:0048009">
    <property type="term" value="P:insulin-like growth factor receptor signaling pathway"/>
    <property type="evidence" value="ECO:0000315"/>
    <property type="project" value="MGI"/>
</dbReference>
<dbReference type="GO" id="GO:0036022">
    <property type="term" value="P:limb joint morphogenesis"/>
    <property type="evidence" value="ECO:0000315"/>
    <property type="project" value="MGI"/>
</dbReference>
<dbReference type="GO" id="GO:0048286">
    <property type="term" value="P:lung alveolus development"/>
    <property type="evidence" value="ECO:0000315"/>
    <property type="project" value="MGI"/>
</dbReference>
<dbReference type="GO" id="GO:0030324">
    <property type="term" value="P:lung development"/>
    <property type="evidence" value="ECO:0000315"/>
    <property type="project" value="MGI"/>
</dbReference>
<dbReference type="GO" id="GO:0060487">
    <property type="term" value="P:lung epithelial cell differentiation"/>
    <property type="evidence" value="ECO:0000315"/>
    <property type="project" value="MGI"/>
</dbReference>
<dbReference type="GO" id="GO:0060425">
    <property type="term" value="P:lung morphogenesis"/>
    <property type="evidence" value="ECO:0000315"/>
    <property type="project" value="MGI"/>
</dbReference>
<dbReference type="GO" id="GO:0051882">
    <property type="term" value="P:mitochondrial depolarization"/>
    <property type="evidence" value="ECO:0000315"/>
    <property type="project" value="MGI"/>
</dbReference>
<dbReference type="GO" id="GO:1990542">
    <property type="term" value="P:mitochondrial transmembrane transport"/>
    <property type="evidence" value="ECO:0000315"/>
    <property type="project" value="MGI"/>
</dbReference>
<dbReference type="GO" id="GO:0007005">
    <property type="term" value="P:mitochondrion organization"/>
    <property type="evidence" value="ECO:0000315"/>
    <property type="project" value="MGI"/>
</dbReference>
<dbReference type="GO" id="GO:0071965">
    <property type="term" value="P:multicellular organismal locomotion"/>
    <property type="evidence" value="ECO:0000315"/>
    <property type="project" value="MGI"/>
</dbReference>
<dbReference type="GO" id="GO:0010657">
    <property type="term" value="P:muscle cell apoptotic process"/>
    <property type="evidence" value="ECO:0000315"/>
    <property type="project" value="MGI"/>
</dbReference>
<dbReference type="GO" id="GO:0055001">
    <property type="term" value="P:muscle cell development"/>
    <property type="evidence" value="ECO:0000315"/>
    <property type="project" value="MGI"/>
</dbReference>
<dbReference type="GO" id="GO:0007517">
    <property type="term" value="P:muscle organ development"/>
    <property type="evidence" value="ECO:0000315"/>
    <property type="project" value="MGI"/>
</dbReference>
<dbReference type="GO" id="GO:0061061">
    <property type="term" value="P:muscle structure development"/>
    <property type="evidence" value="ECO:0000316"/>
    <property type="project" value="MGI"/>
</dbReference>
<dbReference type="GO" id="GO:0003012">
    <property type="term" value="P:muscle system process"/>
    <property type="evidence" value="ECO:0000315"/>
    <property type="project" value="MGI"/>
</dbReference>
<dbReference type="GO" id="GO:0022011">
    <property type="term" value="P:myelination in peripheral nervous system"/>
    <property type="evidence" value="ECO:0000315"/>
    <property type="project" value="MGI"/>
</dbReference>
<dbReference type="GO" id="GO:0050877">
    <property type="term" value="P:nervous system process"/>
    <property type="evidence" value="ECO:0000315"/>
    <property type="project" value="MGI"/>
</dbReference>
<dbReference type="GO" id="GO:0051402">
    <property type="term" value="P:neuron apoptotic process"/>
    <property type="evidence" value="ECO:0000314"/>
    <property type="project" value="MGI"/>
</dbReference>
<dbReference type="GO" id="GO:0001503">
    <property type="term" value="P:ossification"/>
    <property type="evidence" value="ECO:0000315"/>
    <property type="project" value="MGI"/>
</dbReference>
<dbReference type="GO" id="GO:0007422">
    <property type="term" value="P:peripheral nervous system development"/>
    <property type="evidence" value="ECO:0000315"/>
    <property type="project" value="MGI"/>
</dbReference>
<dbReference type="GO" id="GO:0043491">
    <property type="term" value="P:phosphatidylinositol 3-kinase/protein kinase B signal transduction"/>
    <property type="evidence" value="ECO:0000314"/>
    <property type="project" value="MGI"/>
</dbReference>
<dbReference type="GO" id="GO:0051262">
    <property type="term" value="P:protein tetramerization"/>
    <property type="evidence" value="ECO:0000314"/>
    <property type="project" value="MGI"/>
</dbReference>
<dbReference type="GO" id="GO:0072593">
    <property type="term" value="P:reactive oxygen species metabolic process"/>
    <property type="evidence" value="ECO:0000315"/>
    <property type="project" value="MGI"/>
</dbReference>
<dbReference type="GO" id="GO:0002023">
    <property type="term" value="P:reduction of food intake in response to dietary excess"/>
    <property type="evidence" value="ECO:0000315"/>
    <property type="project" value="MGI"/>
</dbReference>
<dbReference type="GO" id="GO:0008361">
    <property type="term" value="P:regulation of cell size"/>
    <property type="evidence" value="ECO:0000315"/>
    <property type="project" value="MGI"/>
</dbReference>
<dbReference type="GO" id="GO:1904026">
    <property type="term" value="P:regulation of collagen fibril organization"/>
    <property type="evidence" value="ECO:0000315"/>
    <property type="project" value="MGI"/>
</dbReference>
<dbReference type="GO" id="GO:0003016">
    <property type="term" value="P:respiratory system process"/>
    <property type="evidence" value="ECO:0000315"/>
    <property type="project" value="MGI"/>
</dbReference>
<dbReference type="GO" id="GO:0014823">
    <property type="term" value="P:response to activity"/>
    <property type="evidence" value="ECO:0000315"/>
    <property type="project" value="MGI"/>
</dbReference>
<dbReference type="GO" id="GO:1904975">
    <property type="term" value="P:response to bleomycin"/>
    <property type="evidence" value="ECO:0000315"/>
    <property type="project" value="MGI"/>
</dbReference>
<dbReference type="GO" id="GO:0036293">
    <property type="term" value="P:response to decreased oxygen levels"/>
    <property type="evidence" value="ECO:0000315"/>
    <property type="project" value="MGI"/>
</dbReference>
<dbReference type="GO" id="GO:0033993">
    <property type="term" value="P:response to lipid"/>
    <property type="evidence" value="ECO:0000315"/>
    <property type="project" value="MGI"/>
</dbReference>
<dbReference type="GO" id="GO:0032496">
    <property type="term" value="P:response to lipopolysaccharide"/>
    <property type="evidence" value="ECO:0000315"/>
    <property type="project" value="MGI"/>
</dbReference>
<dbReference type="GO" id="GO:0009612">
    <property type="term" value="P:response to mechanical stimulus"/>
    <property type="evidence" value="ECO:0000315"/>
    <property type="project" value="MGI"/>
</dbReference>
<dbReference type="GO" id="GO:0014850">
    <property type="term" value="P:response to muscle activity"/>
    <property type="evidence" value="ECO:0000315"/>
    <property type="project" value="MGI"/>
</dbReference>
<dbReference type="GO" id="GO:0048265">
    <property type="term" value="P:response to pain"/>
    <property type="evidence" value="ECO:0000315"/>
    <property type="project" value="MGI"/>
</dbReference>
<dbReference type="GO" id="GO:1901652">
    <property type="term" value="P:response to peptide"/>
    <property type="evidence" value="ECO:0000315"/>
    <property type="project" value="MGI"/>
</dbReference>
<dbReference type="GO" id="GO:1904583">
    <property type="term" value="P:response to polyamine macromolecule"/>
    <property type="evidence" value="ECO:0000315"/>
    <property type="project" value="MGI"/>
</dbReference>
<dbReference type="GO" id="GO:0000302">
    <property type="term" value="P:response to reactive oxygen species"/>
    <property type="evidence" value="ECO:0000315"/>
    <property type="project" value="MGI"/>
</dbReference>
<dbReference type="GO" id="GO:0009636">
    <property type="term" value="P:response to toxic substance"/>
    <property type="evidence" value="ECO:0000315"/>
    <property type="project" value="MGI"/>
</dbReference>
<dbReference type="GO" id="GO:0009411">
    <property type="term" value="P:response to UV"/>
    <property type="evidence" value="ECO:0000314"/>
    <property type="project" value="MGI"/>
</dbReference>
<dbReference type="GO" id="GO:0009611">
    <property type="term" value="P:response to wounding"/>
    <property type="evidence" value="ECO:0000314"/>
    <property type="project" value="MGI"/>
</dbReference>
<dbReference type="GO" id="GO:0009410">
    <property type="term" value="P:response to xenobiotic stimulus"/>
    <property type="evidence" value="ECO:0000315"/>
    <property type="project" value="MGI"/>
</dbReference>
<dbReference type="GO" id="GO:0050954">
    <property type="term" value="P:sensory perception of mechanical stimulus"/>
    <property type="evidence" value="ECO:0000315"/>
    <property type="project" value="MGI"/>
</dbReference>
<dbReference type="GO" id="GO:0007338">
    <property type="term" value="P:single fertilization"/>
    <property type="evidence" value="ECO:0000316"/>
    <property type="project" value="MGI"/>
</dbReference>
<dbReference type="GO" id="GO:0048741">
    <property type="term" value="P:skeletal muscle fiber development"/>
    <property type="evidence" value="ECO:0000315"/>
    <property type="project" value="MGI"/>
</dbReference>
<dbReference type="GO" id="GO:0098528">
    <property type="term" value="P:skeletal muscle fiber differentiation"/>
    <property type="evidence" value="ECO:0000316"/>
    <property type="project" value="MGI"/>
</dbReference>
<dbReference type="GO" id="GO:0060538">
    <property type="term" value="P:skeletal muscle organ development"/>
    <property type="evidence" value="ECO:0000315"/>
    <property type="project" value="MGI"/>
</dbReference>
<dbReference type="GO" id="GO:0007519">
    <property type="term" value="P:skeletal muscle tissue development"/>
    <property type="evidence" value="ECO:0000315"/>
    <property type="project" value="MGI"/>
</dbReference>
<dbReference type="GO" id="GO:0048630">
    <property type="term" value="P:skeletal muscle tissue growth"/>
    <property type="evidence" value="ECO:0000315"/>
    <property type="project" value="MGI"/>
</dbReference>
<dbReference type="GO" id="GO:0043403">
    <property type="term" value="P:skeletal muscle tissue regeneration"/>
    <property type="evidence" value="ECO:0000315"/>
    <property type="project" value="MGI"/>
</dbReference>
<dbReference type="GO" id="GO:0043588">
    <property type="term" value="P:skin development"/>
    <property type="evidence" value="ECO:0000315"/>
    <property type="project" value="MGI"/>
</dbReference>
<dbReference type="GO" id="GO:0048771">
    <property type="term" value="P:tissue remodeling"/>
    <property type="evidence" value="ECO:0000315"/>
    <property type="project" value="MGI"/>
</dbReference>
<dbReference type="GO" id="GO:0019226">
    <property type="term" value="P:transmission of nerve impulse"/>
    <property type="evidence" value="ECO:0000315"/>
    <property type="project" value="MGI"/>
</dbReference>
<dbReference type="GO" id="GO:0006099">
    <property type="term" value="P:tricarboxylic acid cycle"/>
    <property type="evidence" value="ECO:0000315"/>
    <property type="project" value="MGI"/>
</dbReference>
<dbReference type="GO" id="GO:0060065">
    <property type="term" value="P:uterus development"/>
    <property type="evidence" value="ECO:0000316"/>
    <property type="project" value="MGI"/>
</dbReference>
<dbReference type="CDD" id="cd01480">
    <property type="entry name" value="vWA_collagen_alpha_1-VI-type"/>
    <property type="match status" value="3"/>
</dbReference>
<dbReference type="FunFam" id="3.40.50.410:FF:000026">
    <property type="entry name" value="Collagen, type VI, alpha 1"/>
    <property type="match status" value="1"/>
</dbReference>
<dbReference type="FunFam" id="3.40.50.410:FF:000050">
    <property type="entry name" value="Collagen, type VI, alpha 1"/>
    <property type="match status" value="1"/>
</dbReference>
<dbReference type="FunFam" id="3.40.50.410:FF:000060">
    <property type="entry name" value="Collagen, type VI, alpha 1"/>
    <property type="match status" value="1"/>
</dbReference>
<dbReference type="Gene3D" id="3.40.50.410">
    <property type="entry name" value="von Willebrand factor, type A domain"/>
    <property type="match status" value="3"/>
</dbReference>
<dbReference type="InterPro" id="IPR008160">
    <property type="entry name" value="Collagen"/>
</dbReference>
<dbReference type="InterPro" id="IPR052229">
    <property type="entry name" value="Collagen-VI/PIF"/>
</dbReference>
<dbReference type="InterPro" id="IPR002035">
    <property type="entry name" value="VWF_A"/>
</dbReference>
<dbReference type="InterPro" id="IPR036465">
    <property type="entry name" value="vWFA_dom_sf"/>
</dbReference>
<dbReference type="PANTHER" id="PTHR22588:SF5">
    <property type="entry name" value="COLLAGEN ALPHA-6(VI) CHAIN"/>
    <property type="match status" value="1"/>
</dbReference>
<dbReference type="PANTHER" id="PTHR22588">
    <property type="entry name" value="VWFA DOMAIN-CONTAINING PROTEIN"/>
    <property type="match status" value="1"/>
</dbReference>
<dbReference type="Pfam" id="PF01391">
    <property type="entry name" value="Collagen"/>
    <property type="match status" value="5"/>
</dbReference>
<dbReference type="Pfam" id="PF00092">
    <property type="entry name" value="VWA"/>
    <property type="match status" value="3"/>
</dbReference>
<dbReference type="PRINTS" id="PR00453">
    <property type="entry name" value="VWFADOMAIN"/>
</dbReference>
<dbReference type="SMART" id="SM00327">
    <property type="entry name" value="VWA"/>
    <property type="match status" value="3"/>
</dbReference>
<dbReference type="SUPFAM" id="SSF53300">
    <property type="entry name" value="vWA-like"/>
    <property type="match status" value="3"/>
</dbReference>
<dbReference type="PROSITE" id="PS50234">
    <property type="entry name" value="VWFA"/>
    <property type="match status" value="3"/>
</dbReference>
<sequence>MRLAHALLPLLLQACWVATQDIQGSKAIAFQDCPVDLFFVLDTSESVALRLKPYGALVDKVKSFTKRFIDNLRDRYYRCDRNLVWNAGALHYSDEVEIIRGLTRMPSGRDELKASVDAVKYFGKGTYTDCAIKKGLEELLIGGSHLKENKYLIVVTDGHPLEGYKEPCGGLEDAVNEAKHLGIKVFSVAITPDHLEPRLSIIATDHTYRRNFTAADWGHSRDAEEVISQTIDTIVDMIKNNVEQVCCSFECQAARGPPGPRGDPGYEGERGKPGLPGEKGEAGDPGRPGDLGPVGYQGMKGEKGSRGEKGSRGPKGYKGEKGKRGIDGVDGMKGETGYPGLPGCKGSPGFDGIQGPPGPKGDAGAFGMKGEKGEAGADGEAGRPGNSGSPGDEGDPGEPGPPGEKGEAGDEGNAGPDGAPGERGGPGERGPRGTPGVRGPRGDPGEAGPQGDQGREGPVGIPGDSGEAGPIGPKGYRGDEGPPGPEGLRGAPGPVGPPGDPGLMGERGEDGPPGNGTEGFPGFPGYPGNRGPPGLNGTKGYPGLKGDEGEVGDPGEDNNDISPRGVKGAKGYRGPEGPQGPPGHVGPPGPDECEILDIIMKMCSCCECTCGPIDILFVLDSSESIGLQNFEIAKDFIIKVIDRLSKDELVKFEPGQSHAGVVQYSHNQMQEHVDMRSPNVRNAQDFKEAVKKLQWMAGGTFTGEALQYTRDRLLPPTQNNRIALVITDGRSDTQRDTTPLSVLCGADIQVVSVGIKDVFGFVAGSDQLNVISCQGLSQGRPGISLVKENYAELLDDGFLKNITAQICIDKKCPDYTCPITFSSPADITILLDSSASVGSHNFETTKVFAKRLAERFLSAGRADPSQDVRVAVVQYSGQGQQQPGRAALQFLQNYTVLASSVDSMDFINDATDVNDALSYVTRFYREASSGATKKRVLLFSDGNSQGATAEAIEKAVQEAQRAGIEIFVVVVGPQVNEPHIRVLVTGKTAEYDVAFGERHLFRVPNYQALLRGVLYQTVSRKVALG</sequence>
<keyword id="KW-0130">Cell adhesion</keyword>
<keyword id="KW-0176">Collagen</keyword>
<keyword id="KW-0272">Extracellular matrix</keyword>
<keyword id="KW-0325">Glycoprotein</keyword>
<keyword id="KW-0379">Hydroxylation</keyword>
<keyword id="KW-1185">Reference proteome</keyword>
<keyword id="KW-0677">Repeat</keyword>
<keyword id="KW-0964">Secreted</keyword>
<keyword id="KW-0732">Signal</keyword>
<gene>
    <name type="primary">Col6a1</name>
</gene>
<proteinExistence type="evidence at protein level"/>
<accession>Q04857</accession>